<gene>
    <name type="primary">Vwa3a</name>
</gene>
<comment type="sequence caution" evidence="3">
    <conflict type="erroneous termination">
        <sequence resource="EMBL-CDS" id="BAC39770"/>
    </conflict>
    <text>Extended C-terminus.</text>
</comment>
<comment type="sequence caution" evidence="3">
    <conflict type="frameshift">
        <sequence resource="EMBL-CDS" id="BAC39770"/>
    </conflict>
</comment>
<protein>
    <recommendedName>
        <fullName>von Willebrand factor A domain-containing protein 3A</fullName>
    </recommendedName>
</protein>
<sequence length="1148" mass="130106">MKKCRWSMDRNTDRDPQKQENKKTMNDLAQTSQDGLLVTHVNQTQDLLQLQGRETQTSALEDSEDWLAMHSLKFEKLTLADLISQGTVELEDCNNAVPKVHFTTQTIHHFKSRLSDTIELYQQRMRWLTENSKKAFGLIKGSRVGLLIDSSQVSSGSQTKEFQNDLTGLIDEQLSLKEKLYVLSFGVTINPLWPDPMEVSTSTLQELKLWVKTLQPEGSSNLLQALKKVFAHKELNSLVIILRSCPDQPSEFLSDFIQQSTLGRSVFIHVTTYKCDDHVPSAVLKNLTDALGGYYHCYSPESELYTSRDVVELQVETHKAQGLLSQVQALCHNNPCEELSCMIKEISIEIAKGPFTSLLPKPPKHEAPLTIKFPDLDKTSAEWLKINGLKAKKLSLYQVLAPNAFNPVEEFVPILQKTVAATIHEKAMVQFEWHDGTVKNIHVDPPVLFEYQKQLGKAVQIYEHRLQWLSLTSRRIWGTVCQRRVVILLDVSVTNSMYIIHIQHSLRLLLEEQLSNKDYFNIIAFGSTIESWRPEMVAVSHDNLQRAWRWALGLQCQGSRNVLGALRKAIEVDFKDKNKHESQGIYLFTGGIPDQDVHILSAYVAEAYGGCDLQLNVCLFYVGEPQMDTTPPACYASRTDTATAYKEITQAARGRFHWFGETGIYESDDINAIVSEIEKALNYSQKCAFLVASLKNHSEKELQSGALEKDKPRTLKQSQPKKHYPPKPTAPSVARMSIKDGLDGETSSRLKALKCHPVNAAAQPEKEGTVEQRMKTKPRTRPKLFLFYTEAGNSVGSVYKRYTQGKSIRRINSSIQLPRKDTVCSSQEWTATCRLKRLKLELSKCLGPNCRYQKSVRGPALAEHCTLFPSIEINGVVRHIQWTLWEMETYITCMEKVTRCYVQRLHWLLSGSRRLFGTILERNVCILLDTSGSMGPHLQWIKTELVLLIWEQLRKHCARFNLLSFAEDLQLWQDTLVESTEAACHKAMQWVAHLQAQGSTSVLAALTKAFSFQDVQGLYLLTDGKPDTSCSLILNTVQSFQKERGVKVHTISLTSADRTATEFLRELASLSGGRYHCPVSDKALSGIQGLLTRGFIKERDPKLPLFEGDDLRLLAEEFTRARNLLKQAQVFRSQLLKKNNMKSKVTSC</sequence>
<feature type="chain" id="PRO_0000324625" description="von Willebrand factor A domain-containing protein 3A">
    <location>
        <begin position="1"/>
        <end position="1148"/>
    </location>
</feature>
<feature type="domain" description="VWFA 1" evidence="1">
    <location>
        <begin position="484"/>
        <end position="681"/>
    </location>
</feature>
<feature type="domain" description="VWFA 2" evidence="1">
    <location>
        <begin position="923"/>
        <end position="1094"/>
    </location>
</feature>
<feature type="region of interest" description="Disordered" evidence="2">
    <location>
        <begin position="1"/>
        <end position="25"/>
    </location>
</feature>
<feature type="region of interest" description="Disordered" evidence="2">
    <location>
        <begin position="701"/>
        <end position="734"/>
    </location>
</feature>
<feature type="compositionally biased region" description="Basic and acidic residues" evidence="2">
    <location>
        <begin position="701"/>
        <end position="713"/>
    </location>
</feature>
<feature type="sequence conflict" description="In Ref. 1; BAC39770." evidence="3" ref="1">
    <original>R</original>
    <variation>T</variation>
    <location>
        <position position="1132"/>
    </location>
</feature>
<feature type="sequence conflict" description="In Ref. 1; BAC39770." evidence="3" ref="1">
    <original>N</original>
    <variation>T</variation>
    <location>
        <position position="1139"/>
    </location>
</feature>
<keyword id="KW-1185">Reference proteome</keyword>
<keyword id="KW-0677">Repeat</keyword>
<proteinExistence type="evidence at transcript level"/>
<evidence type="ECO:0000255" key="1">
    <source>
        <dbReference type="PROSITE-ProRule" id="PRU00219"/>
    </source>
</evidence>
<evidence type="ECO:0000256" key="2">
    <source>
        <dbReference type="SAM" id="MobiDB-lite"/>
    </source>
</evidence>
<evidence type="ECO:0000305" key="3"/>
<reference key="1">
    <citation type="journal article" date="2005" name="Science">
        <title>The transcriptional landscape of the mammalian genome.</title>
        <authorList>
            <person name="Carninci P."/>
            <person name="Kasukawa T."/>
            <person name="Katayama S."/>
            <person name="Gough J."/>
            <person name="Frith M.C."/>
            <person name="Maeda N."/>
            <person name="Oyama R."/>
            <person name="Ravasi T."/>
            <person name="Lenhard B."/>
            <person name="Wells C."/>
            <person name="Kodzius R."/>
            <person name="Shimokawa K."/>
            <person name="Bajic V.B."/>
            <person name="Brenner S.E."/>
            <person name="Batalov S."/>
            <person name="Forrest A.R."/>
            <person name="Zavolan M."/>
            <person name="Davis M.J."/>
            <person name="Wilming L.G."/>
            <person name="Aidinis V."/>
            <person name="Allen J.E."/>
            <person name="Ambesi-Impiombato A."/>
            <person name="Apweiler R."/>
            <person name="Aturaliya R.N."/>
            <person name="Bailey T.L."/>
            <person name="Bansal M."/>
            <person name="Baxter L."/>
            <person name="Beisel K.W."/>
            <person name="Bersano T."/>
            <person name="Bono H."/>
            <person name="Chalk A.M."/>
            <person name="Chiu K.P."/>
            <person name="Choudhary V."/>
            <person name="Christoffels A."/>
            <person name="Clutterbuck D.R."/>
            <person name="Crowe M.L."/>
            <person name="Dalla E."/>
            <person name="Dalrymple B.P."/>
            <person name="de Bono B."/>
            <person name="Della Gatta G."/>
            <person name="di Bernardo D."/>
            <person name="Down T."/>
            <person name="Engstrom P."/>
            <person name="Fagiolini M."/>
            <person name="Faulkner G."/>
            <person name="Fletcher C.F."/>
            <person name="Fukushima T."/>
            <person name="Furuno M."/>
            <person name="Futaki S."/>
            <person name="Gariboldi M."/>
            <person name="Georgii-Hemming P."/>
            <person name="Gingeras T.R."/>
            <person name="Gojobori T."/>
            <person name="Green R.E."/>
            <person name="Gustincich S."/>
            <person name="Harbers M."/>
            <person name="Hayashi Y."/>
            <person name="Hensch T.K."/>
            <person name="Hirokawa N."/>
            <person name="Hill D."/>
            <person name="Huminiecki L."/>
            <person name="Iacono M."/>
            <person name="Ikeo K."/>
            <person name="Iwama A."/>
            <person name="Ishikawa T."/>
            <person name="Jakt M."/>
            <person name="Kanapin A."/>
            <person name="Katoh M."/>
            <person name="Kawasawa Y."/>
            <person name="Kelso J."/>
            <person name="Kitamura H."/>
            <person name="Kitano H."/>
            <person name="Kollias G."/>
            <person name="Krishnan S.P."/>
            <person name="Kruger A."/>
            <person name="Kummerfeld S.K."/>
            <person name="Kurochkin I.V."/>
            <person name="Lareau L.F."/>
            <person name="Lazarevic D."/>
            <person name="Lipovich L."/>
            <person name="Liu J."/>
            <person name="Liuni S."/>
            <person name="McWilliam S."/>
            <person name="Madan Babu M."/>
            <person name="Madera M."/>
            <person name="Marchionni L."/>
            <person name="Matsuda H."/>
            <person name="Matsuzawa S."/>
            <person name="Miki H."/>
            <person name="Mignone F."/>
            <person name="Miyake S."/>
            <person name="Morris K."/>
            <person name="Mottagui-Tabar S."/>
            <person name="Mulder N."/>
            <person name="Nakano N."/>
            <person name="Nakauchi H."/>
            <person name="Ng P."/>
            <person name="Nilsson R."/>
            <person name="Nishiguchi S."/>
            <person name="Nishikawa S."/>
            <person name="Nori F."/>
            <person name="Ohara O."/>
            <person name="Okazaki Y."/>
            <person name="Orlando V."/>
            <person name="Pang K.C."/>
            <person name="Pavan W.J."/>
            <person name="Pavesi G."/>
            <person name="Pesole G."/>
            <person name="Petrovsky N."/>
            <person name="Piazza S."/>
            <person name="Reed J."/>
            <person name="Reid J.F."/>
            <person name="Ring B.Z."/>
            <person name="Ringwald M."/>
            <person name="Rost B."/>
            <person name="Ruan Y."/>
            <person name="Salzberg S.L."/>
            <person name="Sandelin A."/>
            <person name="Schneider C."/>
            <person name="Schoenbach C."/>
            <person name="Sekiguchi K."/>
            <person name="Semple C.A."/>
            <person name="Seno S."/>
            <person name="Sessa L."/>
            <person name="Sheng Y."/>
            <person name="Shibata Y."/>
            <person name="Shimada H."/>
            <person name="Shimada K."/>
            <person name="Silva D."/>
            <person name="Sinclair B."/>
            <person name="Sperling S."/>
            <person name="Stupka E."/>
            <person name="Sugiura K."/>
            <person name="Sultana R."/>
            <person name="Takenaka Y."/>
            <person name="Taki K."/>
            <person name="Tammoja K."/>
            <person name="Tan S.L."/>
            <person name="Tang S."/>
            <person name="Taylor M.S."/>
            <person name="Tegner J."/>
            <person name="Teichmann S.A."/>
            <person name="Ueda H.R."/>
            <person name="van Nimwegen E."/>
            <person name="Verardo R."/>
            <person name="Wei C.L."/>
            <person name="Yagi K."/>
            <person name="Yamanishi H."/>
            <person name="Zabarovsky E."/>
            <person name="Zhu S."/>
            <person name="Zimmer A."/>
            <person name="Hide W."/>
            <person name="Bult C."/>
            <person name="Grimmond S.M."/>
            <person name="Teasdale R.D."/>
            <person name="Liu E.T."/>
            <person name="Brusic V."/>
            <person name="Quackenbush J."/>
            <person name="Wahlestedt C."/>
            <person name="Mattick J.S."/>
            <person name="Hume D.A."/>
            <person name="Kai C."/>
            <person name="Sasaki D."/>
            <person name="Tomaru Y."/>
            <person name="Fukuda S."/>
            <person name="Kanamori-Katayama M."/>
            <person name="Suzuki M."/>
            <person name="Aoki J."/>
            <person name="Arakawa T."/>
            <person name="Iida J."/>
            <person name="Imamura K."/>
            <person name="Itoh M."/>
            <person name="Kato T."/>
            <person name="Kawaji H."/>
            <person name="Kawagashira N."/>
            <person name="Kawashima T."/>
            <person name="Kojima M."/>
            <person name="Kondo S."/>
            <person name="Konno H."/>
            <person name="Nakano K."/>
            <person name="Ninomiya N."/>
            <person name="Nishio T."/>
            <person name="Okada M."/>
            <person name="Plessy C."/>
            <person name="Shibata K."/>
            <person name="Shiraki T."/>
            <person name="Suzuki S."/>
            <person name="Tagami M."/>
            <person name="Waki K."/>
            <person name="Watahiki A."/>
            <person name="Okamura-Oho Y."/>
            <person name="Suzuki H."/>
            <person name="Kawai J."/>
            <person name="Hayashizaki Y."/>
        </authorList>
    </citation>
    <scope>NUCLEOTIDE SEQUENCE [LARGE SCALE MRNA]</scope>
    <source>
        <strain>C57BL/6J</strain>
        <tissue>Diencephalon</tissue>
        <tissue>Lung</tissue>
    </source>
</reference>
<accession>Q3UVV9</accession>
<accession>Q8C349</accession>
<dbReference type="EMBL" id="AK086942">
    <property type="protein sequence ID" value="BAC39770.1"/>
    <property type="status" value="ALT_FRAME"/>
    <property type="molecule type" value="mRNA"/>
</dbReference>
<dbReference type="EMBL" id="AK136898">
    <property type="protein sequence ID" value="BAE23160.1"/>
    <property type="molecule type" value="mRNA"/>
</dbReference>
<dbReference type="CCDS" id="CCDS40112.1"/>
<dbReference type="RefSeq" id="NP_808365.2">
    <property type="nucleotide sequence ID" value="NM_177697.3"/>
</dbReference>
<dbReference type="RefSeq" id="XP_006507758.1">
    <property type="nucleotide sequence ID" value="XM_006507695.3"/>
</dbReference>
<dbReference type="RefSeq" id="XP_006507759.1">
    <property type="nucleotide sequence ID" value="XM_006507696.3"/>
</dbReference>
<dbReference type="RefSeq" id="XP_030098370.1">
    <property type="nucleotide sequence ID" value="XM_030242510.2"/>
</dbReference>
<dbReference type="RefSeq" id="XP_030098371.1">
    <property type="nucleotide sequence ID" value="XM_030242511.2"/>
</dbReference>
<dbReference type="RefSeq" id="XP_030098372.1">
    <property type="nucleotide sequence ID" value="XM_030242512.2"/>
</dbReference>
<dbReference type="SMR" id="Q3UVV9"/>
<dbReference type="STRING" id="10090.ENSMUSP00000033180"/>
<dbReference type="iPTMnet" id="Q3UVV9"/>
<dbReference type="PhosphoSitePlus" id="Q3UVV9"/>
<dbReference type="jPOST" id="Q3UVV9"/>
<dbReference type="PaxDb" id="10090-ENSMUSP00000033180"/>
<dbReference type="PeptideAtlas" id="Q3UVV9"/>
<dbReference type="ProteomicsDB" id="297620"/>
<dbReference type="Antibodypedia" id="51004">
    <property type="antibodies" value="34 antibodies from 10 providers"/>
</dbReference>
<dbReference type="DNASU" id="233813"/>
<dbReference type="Ensembl" id="ENSMUST00000033180.13">
    <property type="protein sequence ID" value="ENSMUSP00000033180.7"/>
    <property type="gene ID" value="ENSMUSG00000030889.15"/>
</dbReference>
<dbReference type="Ensembl" id="ENSMUST00000166668.9">
    <property type="protein sequence ID" value="ENSMUSP00000129136.2"/>
    <property type="gene ID" value="ENSMUSG00000030889.15"/>
</dbReference>
<dbReference type="Ensembl" id="ENSMUST00000167213.9">
    <property type="protein sequence ID" value="ENSMUSP00000133029.2"/>
    <property type="gene ID" value="ENSMUSG00000030889.15"/>
</dbReference>
<dbReference type="GeneID" id="233813"/>
<dbReference type="KEGG" id="mmu:233813"/>
<dbReference type="UCSC" id="uc009jna.1">
    <property type="organism name" value="mouse"/>
</dbReference>
<dbReference type="AGR" id="MGI:3041229"/>
<dbReference type="CTD" id="146177"/>
<dbReference type="MGI" id="MGI:3041229">
    <property type="gene designation" value="Vwa3a"/>
</dbReference>
<dbReference type="VEuPathDB" id="HostDB:ENSMUSG00000030889"/>
<dbReference type="eggNOG" id="ENOG502QTDG">
    <property type="taxonomic scope" value="Eukaryota"/>
</dbReference>
<dbReference type="GeneTree" id="ENSGT00940000159290"/>
<dbReference type="HOGENOM" id="CLU_008839_0_0_1"/>
<dbReference type="InParanoid" id="Q3UVV9"/>
<dbReference type="OMA" id="PNCTHQK"/>
<dbReference type="OrthoDB" id="299997at2759"/>
<dbReference type="PhylomeDB" id="Q3UVV9"/>
<dbReference type="TreeFam" id="TF328978"/>
<dbReference type="BioGRID-ORCS" id="233813">
    <property type="hits" value="4 hits in 78 CRISPR screens"/>
</dbReference>
<dbReference type="ChiTaRS" id="Vwa3a">
    <property type="organism name" value="mouse"/>
</dbReference>
<dbReference type="PRO" id="PR:Q3UVV9"/>
<dbReference type="Proteomes" id="UP000000589">
    <property type="component" value="Chromosome 7"/>
</dbReference>
<dbReference type="RNAct" id="Q3UVV9">
    <property type="molecule type" value="protein"/>
</dbReference>
<dbReference type="Bgee" id="ENSMUSG00000030889">
    <property type="expression patterns" value="Expressed in seminiferous tubule of testis and 53 other cell types or tissues"/>
</dbReference>
<dbReference type="ExpressionAtlas" id="Q3UVV9">
    <property type="expression patterns" value="baseline and differential"/>
</dbReference>
<dbReference type="Gene3D" id="3.40.50.410">
    <property type="entry name" value="von Willebrand factor, type A domain"/>
    <property type="match status" value="2"/>
</dbReference>
<dbReference type="InterPro" id="IPR002035">
    <property type="entry name" value="VWF_A"/>
</dbReference>
<dbReference type="InterPro" id="IPR036465">
    <property type="entry name" value="vWFA_dom_sf"/>
</dbReference>
<dbReference type="PANTHER" id="PTHR46478">
    <property type="entry name" value="VON WILLEBRAND FACTOR A DOMAIN-CONTAINING PROTEIN 3A"/>
    <property type="match status" value="1"/>
</dbReference>
<dbReference type="PANTHER" id="PTHR46478:SF1">
    <property type="entry name" value="VON WILLEBRAND FACTOR A DOMAIN-CONTAINING PROTEIN 3A"/>
    <property type="match status" value="1"/>
</dbReference>
<dbReference type="Pfam" id="PF13768">
    <property type="entry name" value="VWA_3"/>
    <property type="match status" value="3"/>
</dbReference>
<dbReference type="SMART" id="SM00327">
    <property type="entry name" value="VWA"/>
    <property type="match status" value="1"/>
</dbReference>
<dbReference type="SUPFAM" id="SSF53300">
    <property type="entry name" value="vWA-like"/>
    <property type="match status" value="2"/>
</dbReference>
<dbReference type="PROSITE" id="PS50234">
    <property type="entry name" value="VWFA"/>
    <property type="match status" value="1"/>
</dbReference>
<organism>
    <name type="scientific">Mus musculus</name>
    <name type="common">Mouse</name>
    <dbReference type="NCBI Taxonomy" id="10090"/>
    <lineage>
        <taxon>Eukaryota</taxon>
        <taxon>Metazoa</taxon>
        <taxon>Chordata</taxon>
        <taxon>Craniata</taxon>
        <taxon>Vertebrata</taxon>
        <taxon>Euteleostomi</taxon>
        <taxon>Mammalia</taxon>
        <taxon>Eutheria</taxon>
        <taxon>Euarchontoglires</taxon>
        <taxon>Glires</taxon>
        <taxon>Rodentia</taxon>
        <taxon>Myomorpha</taxon>
        <taxon>Muroidea</taxon>
        <taxon>Muridae</taxon>
        <taxon>Murinae</taxon>
        <taxon>Mus</taxon>
        <taxon>Mus</taxon>
    </lineage>
</organism>
<name>VWA3A_MOUSE</name>